<reference key="1">
    <citation type="journal article" date="2006" name="Proc. Natl. Acad. Sci. U.S.A.">
        <title>Evolution of sensory complexity recorded in a myxobacterial genome.</title>
        <authorList>
            <person name="Goldman B.S."/>
            <person name="Nierman W.C."/>
            <person name="Kaiser D."/>
            <person name="Slater S.C."/>
            <person name="Durkin A.S."/>
            <person name="Eisen J.A."/>
            <person name="Ronning C.M."/>
            <person name="Barbazuk W.B."/>
            <person name="Blanchard M."/>
            <person name="Field C."/>
            <person name="Halling C."/>
            <person name="Hinkle G."/>
            <person name="Iartchuk O."/>
            <person name="Kim H.S."/>
            <person name="Mackenzie C."/>
            <person name="Madupu R."/>
            <person name="Miller N."/>
            <person name="Shvartsbeyn A."/>
            <person name="Sullivan S.A."/>
            <person name="Vaudin M."/>
            <person name="Wiegand R."/>
            <person name="Kaplan H.B."/>
        </authorList>
    </citation>
    <scope>NUCLEOTIDE SEQUENCE [LARGE SCALE GENOMIC DNA]</scope>
    <source>
        <strain>DK1622</strain>
    </source>
</reference>
<evidence type="ECO:0000255" key="1">
    <source>
        <dbReference type="HAMAP-Rule" id="MF_00607"/>
    </source>
</evidence>
<protein>
    <recommendedName>
        <fullName evidence="1">Ribosomal RNA small subunit methyltransferase A</fullName>
        <ecNumber evidence="1">2.1.1.182</ecNumber>
    </recommendedName>
    <alternativeName>
        <fullName evidence="1">16S rRNA (adenine(1518)-N(6)/adenine(1519)-N(6))-dimethyltransferase</fullName>
    </alternativeName>
    <alternativeName>
        <fullName evidence="1">16S rRNA dimethyladenosine transferase</fullName>
    </alternativeName>
    <alternativeName>
        <fullName evidence="1">16S rRNA dimethylase</fullName>
    </alternativeName>
    <alternativeName>
        <fullName evidence="1">S-adenosylmethionine-6-N', N'-adenosyl(rRNA) dimethyltransferase</fullName>
    </alternativeName>
</protein>
<organism>
    <name type="scientific">Myxococcus xanthus (strain DK1622)</name>
    <dbReference type="NCBI Taxonomy" id="246197"/>
    <lineage>
        <taxon>Bacteria</taxon>
        <taxon>Pseudomonadati</taxon>
        <taxon>Myxococcota</taxon>
        <taxon>Myxococcia</taxon>
        <taxon>Myxococcales</taxon>
        <taxon>Cystobacterineae</taxon>
        <taxon>Myxococcaceae</taxon>
        <taxon>Myxococcus</taxon>
    </lineage>
</organism>
<gene>
    <name evidence="1" type="primary">rsmA</name>
    <name evidence="1" type="synonym">ksgA</name>
    <name type="ordered locus">MXAN_2052</name>
</gene>
<comment type="function">
    <text evidence="1">Specifically dimethylates two adjacent adenosines (A1518 and A1519) in the loop of a conserved hairpin near the 3'-end of 16S rRNA in the 30S particle. May play a critical role in biogenesis of 30S subunits.</text>
</comment>
<comment type="catalytic activity">
    <reaction evidence="1">
        <text>adenosine(1518)/adenosine(1519) in 16S rRNA + 4 S-adenosyl-L-methionine = N(6)-dimethyladenosine(1518)/N(6)-dimethyladenosine(1519) in 16S rRNA + 4 S-adenosyl-L-homocysteine + 4 H(+)</text>
        <dbReference type="Rhea" id="RHEA:19609"/>
        <dbReference type="Rhea" id="RHEA-COMP:10232"/>
        <dbReference type="Rhea" id="RHEA-COMP:10233"/>
        <dbReference type="ChEBI" id="CHEBI:15378"/>
        <dbReference type="ChEBI" id="CHEBI:57856"/>
        <dbReference type="ChEBI" id="CHEBI:59789"/>
        <dbReference type="ChEBI" id="CHEBI:74411"/>
        <dbReference type="ChEBI" id="CHEBI:74493"/>
        <dbReference type="EC" id="2.1.1.182"/>
    </reaction>
</comment>
<comment type="subcellular location">
    <subcellularLocation>
        <location evidence="1">Cytoplasm</location>
    </subcellularLocation>
</comment>
<comment type="similarity">
    <text evidence="1">Belongs to the class I-like SAM-binding methyltransferase superfamily. rRNA adenine N(6)-methyltransferase family. RsmA subfamily.</text>
</comment>
<accession>Q1DAP2</accession>
<name>RSMA_MYXXD</name>
<keyword id="KW-0963">Cytoplasm</keyword>
<keyword id="KW-0489">Methyltransferase</keyword>
<keyword id="KW-1185">Reference proteome</keyword>
<keyword id="KW-0694">RNA-binding</keyword>
<keyword id="KW-0698">rRNA processing</keyword>
<keyword id="KW-0949">S-adenosyl-L-methionine</keyword>
<keyword id="KW-0808">Transferase</keyword>
<proteinExistence type="inferred from homology"/>
<dbReference type="EC" id="2.1.1.182" evidence="1"/>
<dbReference type="EMBL" id="CP000113">
    <property type="protein sequence ID" value="ABF87817.1"/>
    <property type="molecule type" value="Genomic_DNA"/>
</dbReference>
<dbReference type="RefSeq" id="WP_011552136.1">
    <property type="nucleotide sequence ID" value="NC_008095.1"/>
</dbReference>
<dbReference type="SMR" id="Q1DAP2"/>
<dbReference type="STRING" id="246197.MXAN_2052"/>
<dbReference type="EnsemblBacteria" id="ABF87817">
    <property type="protein sequence ID" value="ABF87817"/>
    <property type="gene ID" value="MXAN_2052"/>
</dbReference>
<dbReference type="GeneID" id="41359461"/>
<dbReference type="KEGG" id="mxa:MXAN_2052"/>
<dbReference type="eggNOG" id="COG0030">
    <property type="taxonomic scope" value="Bacteria"/>
</dbReference>
<dbReference type="HOGENOM" id="CLU_041220_0_1_7"/>
<dbReference type="OrthoDB" id="9814755at2"/>
<dbReference type="Proteomes" id="UP000002402">
    <property type="component" value="Chromosome"/>
</dbReference>
<dbReference type="GO" id="GO:0005829">
    <property type="term" value="C:cytosol"/>
    <property type="evidence" value="ECO:0007669"/>
    <property type="project" value="TreeGrafter"/>
</dbReference>
<dbReference type="GO" id="GO:0052908">
    <property type="term" value="F:16S rRNA (adenine(1518)-N(6)/adenine(1519)-N(6))-dimethyltransferase activity"/>
    <property type="evidence" value="ECO:0007669"/>
    <property type="project" value="UniProtKB-EC"/>
</dbReference>
<dbReference type="GO" id="GO:0003723">
    <property type="term" value="F:RNA binding"/>
    <property type="evidence" value="ECO:0007669"/>
    <property type="project" value="UniProtKB-KW"/>
</dbReference>
<dbReference type="CDD" id="cd02440">
    <property type="entry name" value="AdoMet_MTases"/>
    <property type="match status" value="1"/>
</dbReference>
<dbReference type="Gene3D" id="1.10.8.100">
    <property type="entry name" value="Ribosomal RNA adenine dimethylase-like, domain 2"/>
    <property type="match status" value="1"/>
</dbReference>
<dbReference type="Gene3D" id="3.40.50.150">
    <property type="entry name" value="Vaccinia Virus protein VP39"/>
    <property type="match status" value="1"/>
</dbReference>
<dbReference type="HAMAP" id="MF_00607">
    <property type="entry name" value="16SrRNA_methyltr_A"/>
    <property type="match status" value="1"/>
</dbReference>
<dbReference type="InterPro" id="IPR001737">
    <property type="entry name" value="KsgA/Erm"/>
</dbReference>
<dbReference type="InterPro" id="IPR023165">
    <property type="entry name" value="rRNA_Ade_diMease-like_C"/>
</dbReference>
<dbReference type="InterPro" id="IPR020596">
    <property type="entry name" value="rRNA_Ade_Mease_Trfase_CS"/>
</dbReference>
<dbReference type="InterPro" id="IPR020598">
    <property type="entry name" value="rRNA_Ade_methylase_Trfase_N"/>
</dbReference>
<dbReference type="InterPro" id="IPR011530">
    <property type="entry name" value="rRNA_adenine_dimethylase"/>
</dbReference>
<dbReference type="InterPro" id="IPR029063">
    <property type="entry name" value="SAM-dependent_MTases_sf"/>
</dbReference>
<dbReference type="NCBIfam" id="TIGR00755">
    <property type="entry name" value="ksgA"/>
    <property type="match status" value="1"/>
</dbReference>
<dbReference type="PANTHER" id="PTHR11727">
    <property type="entry name" value="DIMETHYLADENOSINE TRANSFERASE"/>
    <property type="match status" value="1"/>
</dbReference>
<dbReference type="PANTHER" id="PTHR11727:SF7">
    <property type="entry name" value="DIMETHYLADENOSINE TRANSFERASE-RELATED"/>
    <property type="match status" value="1"/>
</dbReference>
<dbReference type="Pfam" id="PF00398">
    <property type="entry name" value="RrnaAD"/>
    <property type="match status" value="1"/>
</dbReference>
<dbReference type="SMART" id="SM00650">
    <property type="entry name" value="rADc"/>
    <property type="match status" value="1"/>
</dbReference>
<dbReference type="SUPFAM" id="SSF53335">
    <property type="entry name" value="S-adenosyl-L-methionine-dependent methyltransferases"/>
    <property type="match status" value="1"/>
</dbReference>
<dbReference type="PROSITE" id="PS01131">
    <property type="entry name" value="RRNA_A_DIMETH"/>
    <property type="match status" value="1"/>
</dbReference>
<dbReference type="PROSITE" id="PS51689">
    <property type="entry name" value="SAM_RNA_A_N6_MT"/>
    <property type="match status" value="1"/>
</dbReference>
<sequence length="283" mass="30871">MESPRDILKRHGLRAKYSWGQNFLGDEDALEAIADALNLRADEPVVELGPGLGHLTRFLAATGARVTAVERDRDMVMVLEKEAIPGVRVVSGNAATVDFAQVAGAPDVAVAGNLPYHLTSPILFRVLEQRAHVSRAVFTLQKEVVERLAAEPGNRDYGLLTVLLGMHYDAENVLTLEAWRFHPPPKVDSAVLRLTRRKSPRAPIIDEARFTRVVKASFAHRRKTLINSIKSDPTLGTTETLIAALEAAGVDPQRRAETLTPEEFAAIERALGPLTPATSTPAE</sequence>
<feature type="chain" id="PRO_0000257308" description="Ribosomal RNA small subunit methyltransferase A">
    <location>
        <begin position="1"/>
        <end position="283"/>
    </location>
</feature>
<feature type="binding site" evidence="1">
    <location>
        <position position="22"/>
    </location>
    <ligand>
        <name>S-adenosyl-L-methionine</name>
        <dbReference type="ChEBI" id="CHEBI:59789"/>
    </ligand>
</feature>
<feature type="binding site" evidence="1">
    <location>
        <position position="24"/>
    </location>
    <ligand>
        <name>S-adenosyl-L-methionine</name>
        <dbReference type="ChEBI" id="CHEBI:59789"/>
    </ligand>
</feature>
<feature type="binding site" evidence="1">
    <location>
        <position position="49"/>
    </location>
    <ligand>
        <name>S-adenosyl-L-methionine</name>
        <dbReference type="ChEBI" id="CHEBI:59789"/>
    </ligand>
</feature>
<feature type="binding site" evidence="1">
    <location>
        <position position="70"/>
    </location>
    <ligand>
        <name>S-adenosyl-L-methionine</name>
        <dbReference type="ChEBI" id="CHEBI:59789"/>
    </ligand>
</feature>
<feature type="binding site" evidence="1">
    <location>
        <position position="113"/>
    </location>
    <ligand>
        <name>S-adenosyl-L-methionine</name>
        <dbReference type="ChEBI" id="CHEBI:59789"/>
    </ligand>
</feature>